<gene>
    <name evidence="1" type="primary">pgi</name>
    <name type="ordered locus">M28_Spy0183</name>
</gene>
<reference key="1">
    <citation type="journal article" date="2005" name="J. Infect. Dis.">
        <title>Genome sequence of a serotype M28 strain of group A Streptococcus: potential new insights into puerperal sepsis and bacterial disease specificity.</title>
        <authorList>
            <person name="Green N.M."/>
            <person name="Zhang S."/>
            <person name="Porcella S.F."/>
            <person name="Nagiec M.J."/>
            <person name="Barbian K.D."/>
            <person name="Beres S.B."/>
            <person name="Lefebvre R.B."/>
            <person name="Musser J.M."/>
        </authorList>
    </citation>
    <scope>NUCLEOTIDE SEQUENCE [LARGE SCALE GENOMIC DNA]</scope>
    <source>
        <strain>MGAS6180</strain>
    </source>
</reference>
<sequence length="449" mass="49481">MSHITFDYSKVLESFAGQHEIDFLQGQVTEADKLLREGTGPGSDFLGWLDLPENYDKEEFARILTAAEKIKADSEVLVVIGIGGSYLGAKAAIDFLNHHFANLQTAKERKAPQILYAGNSISSTYLADLVEYVQDKEFSVNVISKSGTTTEPAIAFRVFKELLVKKYGQEEANKRIYATTDKVKGAVKLEADANNWETFVVPDNVGGRFSVLTAVGLLPIAASGADITALMEGANAARKDLSSDKISENIAYQYAAVRNVLYRKGYITEILANYEPSLQYFGEWWKQLAGESEGKDQKGIYPTSANFSTDLHSLGQFIQEGYRNLFETVIRVDNPRKNVIIPELAEDLDGLGYLQGKDVDFVNKKATDGVLLAHTDGGVPNMFVTLPAQDEFTLGYTIYFFELAIAVSGYMNAVNPFDQPGVEAYKRNMFALLGKPGFEALSAELNARL</sequence>
<organism>
    <name type="scientific">Streptococcus pyogenes serotype M28 (strain MGAS6180)</name>
    <dbReference type="NCBI Taxonomy" id="319701"/>
    <lineage>
        <taxon>Bacteria</taxon>
        <taxon>Bacillati</taxon>
        <taxon>Bacillota</taxon>
        <taxon>Bacilli</taxon>
        <taxon>Lactobacillales</taxon>
        <taxon>Streptococcaceae</taxon>
        <taxon>Streptococcus</taxon>
    </lineage>
</organism>
<dbReference type="EC" id="5.3.1.9" evidence="1"/>
<dbReference type="EMBL" id="CP000056">
    <property type="protein sequence ID" value="AAX71297.1"/>
    <property type="molecule type" value="Genomic_DNA"/>
</dbReference>
<dbReference type="RefSeq" id="WP_011284480.1">
    <property type="nucleotide sequence ID" value="NC_007296.2"/>
</dbReference>
<dbReference type="SMR" id="Q48VF9"/>
<dbReference type="KEGG" id="spb:M28_Spy0183"/>
<dbReference type="HOGENOM" id="CLU_037303_0_1_9"/>
<dbReference type="UniPathway" id="UPA00109">
    <property type="reaction ID" value="UER00181"/>
</dbReference>
<dbReference type="UniPathway" id="UPA00138"/>
<dbReference type="GO" id="GO:0005829">
    <property type="term" value="C:cytosol"/>
    <property type="evidence" value="ECO:0007669"/>
    <property type="project" value="TreeGrafter"/>
</dbReference>
<dbReference type="GO" id="GO:0097367">
    <property type="term" value="F:carbohydrate derivative binding"/>
    <property type="evidence" value="ECO:0007669"/>
    <property type="project" value="InterPro"/>
</dbReference>
<dbReference type="GO" id="GO:0004347">
    <property type="term" value="F:glucose-6-phosphate isomerase activity"/>
    <property type="evidence" value="ECO:0007669"/>
    <property type="project" value="UniProtKB-UniRule"/>
</dbReference>
<dbReference type="GO" id="GO:0048029">
    <property type="term" value="F:monosaccharide binding"/>
    <property type="evidence" value="ECO:0007669"/>
    <property type="project" value="TreeGrafter"/>
</dbReference>
<dbReference type="GO" id="GO:0006094">
    <property type="term" value="P:gluconeogenesis"/>
    <property type="evidence" value="ECO:0007669"/>
    <property type="project" value="UniProtKB-UniRule"/>
</dbReference>
<dbReference type="GO" id="GO:0051156">
    <property type="term" value="P:glucose 6-phosphate metabolic process"/>
    <property type="evidence" value="ECO:0007669"/>
    <property type="project" value="TreeGrafter"/>
</dbReference>
<dbReference type="GO" id="GO:0006096">
    <property type="term" value="P:glycolytic process"/>
    <property type="evidence" value="ECO:0007669"/>
    <property type="project" value="UniProtKB-UniRule"/>
</dbReference>
<dbReference type="CDD" id="cd05015">
    <property type="entry name" value="SIS_PGI_1"/>
    <property type="match status" value="1"/>
</dbReference>
<dbReference type="CDD" id="cd05016">
    <property type="entry name" value="SIS_PGI_2"/>
    <property type="match status" value="1"/>
</dbReference>
<dbReference type="FunFam" id="3.40.50.10490:FF:000015">
    <property type="entry name" value="Glucose-6-phosphate isomerase"/>
    <property type="match status" value="1"/>
</dbReference>
<dbReference type="FunFam" id="3.40.50.10490:FF:000016">
    <property type="entry name" value="Glucose-6-phosphate isomerase"/>
    <property type="match status" value="1"/>
</dbReference>
<dbReference type="Gene3D" id="3.40.50.10490">
    <property type="entry name" value="Glucose-6-phosphate isomerase like protein, domain 1"/>
    <property type="match status" value="2"/>
</dbReference>
<dbReference type="HAMAP" id="MF_00473">
    <property type="entry name" value="G6P_isomerase"/>
    <property type="match status" value="1"/>
</dbReference>
<dbReference type="InterPro" id="IPR001672">
    <property type="entry name" value="G6P_Isomerase"/>
</dbReference>
<dbReference type="InterPro" id="IPR018189">
    <property type="entry name" value="Phosphoglucose_isomerase_CS"/>
</dbReference>
<dbReference type="InterPro" id="IPR046348">
    <property type="entry name" value="SIS_dom_sf"/>
</dbReference>
<dbReference type="InterPro" id="IPR035476">
    <property type="entry name" value="SIS_PGI_1"/>
</dbReference>
<dbReference type="InterPro" id="IPR035482">
    <property type="entry name" value="SIS_PGI_2"/>
</dbReference>
<dbReference type="NCBIfam" id="NF010697">
    <property type="entry name" value="PRK14097.1"/>
    <property type="match status" value="1"/>
</dbReference>
<dbReference type="PANTHER" id="PTHR11469">
    <property type="entry name" value="GLUCOSE-6-PHOSPHATE ISOMERASE"/>
    <property type="match status" value="1"/>
</dbReference>
<dbReference type="PANTHER" id="PTHR11469:SF1">
    <property type="entry name" value="GLUCOSE-6-PHOSPHATE ISOMERASE"/>
    <property type="match status" value="1"/>
</dbReference>
<dbReference type="Pfam" id="PF00342">
    <property type="entry name" value="PGI"/>
    <property type="match status" value="1"/>
</dbReference>
<dbReference type="PRINTS" id="PR00662">
    <property type="entry name" value="G6PISOMERASE"/>
</dbReference>
<dbReference type="SUPFAM" id="SSF53697">
    <property type="entry name" value="SIS domain"/>
    <property type="match status" value="1"/>
</dbReference>
<dbReference type="PROSITE" id="PS00765">
    <property type="entry name" value="P_GLUCOSE_ISOMERASE_1"/>
    <property type="match status" value="1"/>
</dbReference>
<dbReference type="PROSITE" id="PS00174">
    <property type="entry name" value="P_GLUCOSE_ISOMERASE_2"/>
    <property type="match status" value="1"/>
</dbReference>
<dbReference type="PROSITE" id="PS51463">
    <property type="entry name" value="P_GLUCOSE_ISOMERASE_3"/>
    <property type="match status" value="1"/>
</dbReference>
<keyword id="KW-0963">Cytoplasm</keyword>
<keyword id="KW-0312">Gluconeogenesis</keyword>
<keyword id="KW-0324">Glycolysis</keyword>
<keyword id="KW-0413">Isomerase</keyword>
<comment type="function">
    <text evidence="1">Catalyzes the reversible isomerization of glucose-6-phosphate to fructose-6-phosphate.</text>
</comment>
<comment type="catalytic activity">
    <reaction evidence="1">
        <text>alpha-D-glucose 6-phosphate = beta-D-fructose 6-phosphate</text>
        <dbReference type="Rhea" id="RHEA:11816"/>
        <dbReference type="ChEBI" id="CHEBI:57634"/>
        <dbReference type="ChEBI" id="CHEBI:58225"/>
        <dbReference type="EC" id="5.3.1.9"/>
    </reaction>
</comment>
<comment type="pathway">
    <text evidence="1">Carbohydrate biosynthesis; gluconeogenesis.</text>
</comment>
<comment type="pathway">
    <text evidence="1">Carbohydrate degradation; glycolysis; D-glyceraldehyde 3-phosphate and glycerone phosphate from D-glucose: step 2/4.</text>
</comment>
<comment type="subcellular location">
    <subcellularLocation>
        <location evidence="1">Cytoplasm</location>
    </subcellularLocation>
</comment>
<comment type="similarity">
    <text evidence="1">Belongs to the GPI family.</text>
</comment>
<proteinExistence type="inferred from homology"/>
<protein>
    <recommendedName>
        <fullName evidence="1">Glucose-6-phosphate isomerase</fullName>
        <shortName evidence="1">GPI</shortName>
        <ecNumber evidence="1">5.3.1.9</ecNumber>
    </recommendedName>
    <alternativeName>
        <fullName evidence="1">Phosphoglucose isomerase</fullName>
        <shortName evidence="1">PGI</shortName>
    </alternativeName>
    <alternativeName>
        <fullName evidence="1">Phosphohexose isomerase</fullName>
        <shortName evidence="1">PHI</shortName>
    </alternativeName>
</protein>
<feature type="chain" id="PRO_0000180742" description="Glucose-6-phosphate isomerase">
    <location>
        <begin position="1"/>
        <end position="449"/>
    </location>
</feature>
<feature type="active site" description="Proton donor" evidence="1">
    <location>
        <position position="291"/>
    </location>
</feature>
<feature type="active site" evidence="1">
    <location>
        <position position="312"/>
    </location>
</feature>
<feature type="active site" evidence="1">
    <location>
        <position position="426"/>
    </location>
</feature>
<accession>Q48VF9</accession>
<evidence type="ECO:0000255" key="1">
    <source>
        <dbReference type="HAMAP-Rule" id="MF_00473"/>
    </source>
</evidence>
<name>G6PI_STRPM</name>